<comment type="function">
    <text evidence="1">One of the essential components for the initiation of protein synthesis. Stabilizes the binding of IF-2 and IF-3 on the 30S subunit to which N-formylmethionyl-tRNA(fMet) subsequently binds. Helps modulate mRNA selection, yielding the 30S pre-initiation complex (PIC). Upon addition of the 50S ribosomal subunit IF-1, IF-2 and IF-3 are released leaving the mature 70S translation initiation complex.</text>
</comment>
<comment type="subunit">
    <text evidence="1">Component of the 30S ribosomal translation pre-initiation complex which assembles on the 30S ribosome in the order IF-2 and IF-3, IF-1 and N-formylmethionyl-tRNA(fMet); mRNA recruitment can occur at any time during PIC assembly.</text>
</comment>
<comment type="subcellular location">
    <subcellularLocation>
        <location evidence="1">Cytoplasm</location>
    </subcellularLocation>
</comment>
<comment type="similarity">
    <text evidence="1">Belongs to the IF-1 family.</text>
</comment>
<proteinExistence type="inferred from homology"/>
<keyword id="KW-0963">Cytoplasm</keyword>
<keyword id="KW-0396">Initiation factor</keyword>
<keyword id="KW-0648">Protein biosynthesis</keyword>
<keyword id="KW-1185">Reference proteome</keyword>
<keyword id="KW-0694">RNA-binding</keyword>
<keyword id="KW-0699">rRNA-binding</keyword>
<protein>
    <recommendedName>
        <fullName evidence="1">Translation initiation factor IF-1</fullName>
    </recommendedName>
</protein>
<dbReference type="EMBL" id="CP000509">
    <property type="protein sequence ID" value="ABL83378.1"/>
    <property type="molecule type" value="Genomic_DNA"/>
</dbReference>
<dbReference type="RefSeq" id="WP_011757309.1">
    <property type="nucleotide sequence ID" value="NC_008699.1"/>
</dbReference>
<dbReference type="SMR" id="A1SNJ3"/>
<dbReference type="STRING" id="196162.Noca_3880"/>
<dbReference type="KEGG" id="nca:Noca_3880"/>
<dbReference type="eggNOG" id="COG0361">
    <property type="taxonomic scope" value="Bacteria"/>
</dbReference>
<dbReference type="HOGENOM" id="CLU_151267_1_0_11"/>
<dbReference type="OrthoDB" id="9803250at2"/>
<dbReference type="Proteomes" id="UP000000640">
    <property type="component" value="Chromosome"/>
</dbReference>
<dbReference type="GO" id="GO:0005829">
    <property type="term" value="C:cytosol"/>
    <property type="evidence" value="ECO:0007669"/>
    <property type="project" value="TreeGrafter"/>
</dbReference>
<dbReference type="GO" id="GO:0043022">
    <property type="term" value="F:ribosome binding"/>
    <property type="evidence" value="ECO:0007669"/>
    <property type="project" value="UniProtKB-UniRule"/>
</dbReference>
<dbReference type="GO" id="GO:0019843">
    <property type="term" value="F:rRNA binding"/>
    <property type="evidence" value="ECO:0007669"/>
    <property type="project" value="UniProtKB-UniRule"/>
</dbReference>
<dbReference type="GO" id="GO:0003743">
    <property type="term" value="F:translation initiation factor activity"/>
    <property type="evidence" value="ECO:0007669"/>
    <property type="project" value="UniProtKB-UniRule"/>
</dbReference>
<dbReference type="CDD" id="cd04451">
    <property type="entry name" value="S1_IF1"/>
    <property type="match status" value="1"/>
</dbReference>
<dbReference type="FunFam" id="2.40.50.140:FF:000002">
    <property type="entry name" value="Translation initiation factor IF-1"/>
    <property type="match status" value="1"/>
</dbReference>
<dbReference type="Gene3D" id="2.40.50.140">
    <property type="entry name" value="Nucleic acid-binding proteins"/>
    <property type="match status" value="1"/>
</dbReference>
<dbReference type="HAMAP" id="MF_00075">
    <property type="entry name" value="IF_1"/>
    <property type="match status" value="1"/>
</dbReference>
<dbReference type="InterPro" id="IPR012340">
    <property type="entry name" value="NA-bd_OB-fold"/>
</dbReference>
<dbReference type="InterPro" id="IPR006196">
    <property type="entry name" value="RNA-binding_domain_S1_IF1"/>
</dbReference>
<dbReference type="InterPro" id="IPR003029">
    <property type="entry name" value="S1_domain"/>
</dbReference>
<dbReference type="InterPro" id="IPR004368">
    <property type="entry name" value="TIF_IF1"/>
</dbReference>
<dbReference type="NCBIfam" id="TIGR00008">
    <property type="entry name" value="infA"/>
    <property type="match status" value="1"/>
</dbReference>
<dbReference type="PANTHER" id="PTHR33370">
    <property type="entry name" value="TRANSLATION INITIATION FACTOR IF-1, CHLOROPLASTIC"/>
    <property type="match status" value="1"/>
</dbReference>
<dbReference type="PANTHER" id="PTHR33370:SF1">
    <property type="entry name" value="TRANSLATION INITIATION FACTOR IF-1, CHLOROPLASTIC"/>
    <property type="match status" value="1"/>
</dbReference>
<dbReference type="Pfam" id="PF01176">
    <property type="entry name" value="eIF-1a"/>
    <property type="match status" value="1"/>
</dbReference>
<dbReference type="SMART" id="SM00316">
    <property type="entry name" value="S1"/>
    <property type="match status" value="1"/>
</dbReference>
<dbReference type="SUPFAM" id="SSF50249">
    <property type="entry name" value="Nucleic acid-binding proteins"/>
    <property type="match status" value="1"/>
</dbReference>
<dbReference type="PROSITE" id="PS50832">
    <property type="entry name" value="S1_IF1_TYPE"/>
    <property type="match status" value="1"/>
</dbReference>
<evidence type="ECO:0000255" key="1">
    <source>
        <dbReference type="HAMAP-Rule" id="MF_00075"/>
    </source>
</evidence>
<gene>
    <name evidence="1" type="primary">infA</name>
    <name type="ordered locus">Noca_3880</name>
</gene>
<sequence>MPKKEGVIEIEGTVVEALPNAMFRVELSNGHKVLAHISGKMRQHYIRILPEDRVVVELSPYDLTRGRIVYRYK</sequence>
<accession>A1SNJ3</accession>
<feature type="chain" id="PRO_0000338873" description="Translation initiation factor IF-1">
    <location>
        <begin position="1"/>
        <end position="73"/>
    </location>
</feature>
<feature type="domain" description="S1-like" evidence="1">
    <location>
        <begin position="1"/>
        <end position="73"/>
    </location>
</feature>
<name>IF1_NOCSJ</name>
<organism>
    <name type="scientific">Nocardioides sp. (strain ATCC BAA-499 / JS614)</name>
    <dbReference type="NCBI Taxonomy" id="196162"/>
    <lineage>
        <taxon>Bacteria</taxon>
        <taxon>Bacillati</taxon>
        <taxon>Actinomycetota</taxon>
        <taxon>Actinomycetes</taxon>
        <taxon>Propionibacteriales</taxon>
        <taxon>Nocardioidaceae</taxon>
        <taxon>Nocardioides</taxon>
    </lineage>
</organism>
<reference key="1">
    <citation type="submission" date="2006-12" db="EMBL/GenBank/DDBJ databases">
        <title>Complete sequence of chromosome 1 of Nocardioides sp. JS614.</title>
        <authorList>
            <person name="Copeland A."/>
            <person name="Lucas S."/>
            <person name="Lapidus A."/>
            <person name="Barry K."/>
            <person name="Detter J.C."/>
            <person name="Glavina del Rio T."/>
            <person name="Hammon N."/>
            <person name="Israni S."/>
            <person name="Dalin E."/>
            <person name="Tice H."/>
            <person name="Pitluck S."/>
            <person name="Thompson L.S."/>
            <person name="Brettin T."/>
            <person name="Bruce D."/>
            <person name="Han C."/>
            <person name="Tapia R."/>
            <person name="Schmutz J."/>
            <person name="Larimer F."/>
            <person name="Land M."/>
            <person name="Hauser L."/>
            <person name="Kyrpides N."/>
            <person name="Kim E."/>
            <person name="Mattes T."/>
            <person name="Gossett J."/>
            <person name="Richardson P."/>
        </authorList>
    </citation>
    <scope>NUCLEOTIDE SEQUENCE [LARGE SCALE GENOMIC DNA]</scope>
    <source>
        <strain>ATCC BAA-499 / JS614</strain>
    </source>
</reference>